<proteinExistence type="evidence at protein level"/>
<protein>
    <recommendedName>
        <fullName evidence="13">Inner kinetochore subunit CTF19</fullName>
    </recommendedName>
    <alternativeName>
        <fullName evidence="12">CENP-P homolog</fullName>
    </alternativeName>
    <alternativeName>
        <fullName>Chromosome transmission fidelity protein 19</fullName>
    </alternativeName>
    <alternativeName>
        <fullName evidence="13">Constitutive centromere-associated network protein CTF19</fullName>
    </alternativeName>
    <alternativeName>
        <fullName>Minichromosome maintenance protein 18</fullName>
    </alternativeName>
</protein>
<gene>
    <name type="primary">CTF19</name>
    <name type="synonym">MCM18</name>
    <name type="ordered locus">YPL018W</name>
    <name type="ORF">LPB13W</name>
</gene>
<keyword id="KW-0002">3D-structure</keyword>
<keyword id="KW-0131">Cell cycle</keyword>
<keyword id="KW-0132">Cell division</keyword>
<keyword id="KW-0137">Centromere</keyword>
<keyword id="KW-0158">Chromosome</keyword>
<keyword id="KW-0175">Coiled coil</keyword>
<keyword id="KW-0995">Kinetochore</keyword>
<keyword id="KW-0469">Meiosis</keyword>
<keyword id="KW-0498">Mitosis</keyword>
<keyword id="KW-0539">Nucleus</keyword>
<keyword id="KW-1185">Reference proteome</keyword>
<sequence>MDFTSDTTNSHDTSNSHLSLEDAVGTHHAGEADVNIDGDEKQQLSLLDDDQVRALKLQEEKDALLTRRNTLLQEIQTYQNILMKENNSKTKNGDILQNDITQDFLNLISISSSNPNSAISDRKRVERINGLTNLQKELVTKYDTLPLLNMNLRLSYLRDHTYPHLQVSVQSRDRVHNDGIEVLVVNYKFCRNTMNPFEIQFKMFYKFEDSTLLKWEILRISTNVRLKAKQLLATRNFQKCLLSLYEFDKIKSKKTGIFQNLINLLKRKTRCYLMNNSDSLIVERVIREGRLTTIKLQINFIITMPGERGKPRNCFLPMSKISIALWKGGERFNQIDLDEICYGLIKEYGVKTGLKEICNVCLFPDMYAR</sequence>
<evidence type="ECO:0000250" key="1">
    <source>
        <dbReference type="UniProtKB" id="Q6CRN7"/>
    </source>
</evidence>
<evidence type="ECO:0000255" key="2"/>
<evidence type="ECO:0000269" key="3">
    <source>
    </source>
</evidence>
<evidence type="ECO:0000269" key="4">
    <source>
    </source>
</evidence>
<evidence type="ECO:0000269" key="5">
    <source>
    </source>
</evidence>
<evidence type="ECO:0000269" key="6">
    <source>
    </source>
</evidence>
<evidence type="ECO:0000269" key="7">
    <source>
    </source>
</evidence>
<evidence type="ECO:0000269" key="8">
    <source>
    </source>
</evidence>
<evidence type="ECO:0000269" key="9">
    <source>
    </source>
</evidence>
<evidence type="ECO:0000269" key="10">
    <source>
    </source>
</evidence>
<evidence type="ECO:0000269" key="11">
    <source>
    </source>
</evidence>
<evidence type="ECO:0000303" key="12">
    <source>
    </source>
</evidence>
<evidence type="ECO:0000305" key="13"/>
<evidence type="ECO:0007829" key="14">
    <source>
        <dbReference type="PDB" id="6QLF"/>
    </source>
</evidence>
<evidence type="ECO:0007829" key="15">
    <source>
        <dbReference type="PDB" id="8OVW"/>
    </source>
</evidence>
<evidence type="ECO:0007829" key="16">
    <source>
        <dbReference type="PDB" id="8OW0"/>
    </source>
</evidence>
<accession>Q02732</accession>
<accession>D6W3Z4</accession>
<comment type="function">
    <text evidence="3 9">Component of the kinetochore, a multiprotein complex that assembles on centromeric DNA and attaches chromosomes to spindle microtubules, mediating chromosome segregation and sister chromatid segregation during meiosis and mitosis. Component of the inner kinetochore COMA complex, which connects centromere-associated proteins and the outer kinetochore. COMA interacts with other inner kinetochore proteins to form the inner kinetochore constitutive centromere-associated network (CCAN), which serves as a structural platform for outer kinetochore assembly.</text>
</comment>
<comment type="subunit">
    <text evidence="1 3 4 5 6 7 9 10">Component of the heterotetrameric kinetochore subcomplex COMA, which consists of AME1, CTF19, MCM21 and OKP1 (PubMed:10323865, PubMed:14633972). The COMA subcomplex is part of a larger constitutive centromere-associated network (CCAN) (also known as central kinetochore CTF19 complex in yeast), which is composed of at least AME1, CHL4, CNN1, CTF3, CTF19, IML3, MCM16, MCM21, MCM22, MHF1, MHF2, MIF2, NKP1, NKP2, OKP1 and WIP1 (PubMed:12408861, PubMed:22561346). COMA binds the centromeric nucleosome-binding protein MIF2, and to the outer kinetochore MIND subcomplex (By similarity). CTF19 interacts with the CTF3 complex subunits CTF3, MCM16 and MCM22 as well as CHL4 and IML3 (PubMed:11782448, PubMed:12589047). Interacts with the N-terminal domain of centromeric nucleosome protein CSE4 and with the CBF3 complex subunit A (CBF2) (PubMed:10958698).</text>
</comment>
<comment type="interaction">
    <interactant intactId="EBI-5199">
        <id>Q02732</id>
    </interactant>
    <interactant intactId="EBI-30457">
        <id>Q12748</id>
        <label>CTF3</label>
    </interactant>
    <organismsDiffer>false</organismsDiffer>
    <experiments>3</experiments>
</comment>
<comment type="interaction">
    <interactant intactId="EBI-5199">
        <id>Q02732</id>
    </interactant>
    <interactant intactId="EBI-23268">
        <id>P53267</id>
        <label>DAM1</label>
    </interactant>
    <organismsDiffer>false</organismsDiffer>
    <experiments>2</experiments>
</comment>
<comment type="interaction">
    <interactant intactId="EBI-5199">
        <id>Q02732</id>
    </interactant>
    <interactant intactId="EBI-31487">
        <id>Q12262</id>
        <label>MCM16</label>
    </interactant>
    <organismsDiffer>false</organismsDiffer>
    <experiments>3</experiments>
</comment>
<comment type="interaction">
    <interactant intactId="EBI-5199">
        <id>Q02732</id>
    </interactant>
    <interactant intactId="EBI-25691">
        <id>P47167</id>
        <label>MCM22</label>
    </interactant>
    <organismsDiffer>false</organismsDiffer>
    <experiments>2</experiments>
</comment>
<comment type="subcellular location">
    <subcellularLocation>
        <location evidence="11">Nucleus</location>
    </subcellularLocation>
    <subcellularLocation>
        <location evidence="11">Chromosome</location>
        <location evidence="11">Centromere</location>
        <location evidence="11">Kinetochore</location>
    </subcellularLocation>
</comment>
<comment type="miscellaneous">
    <text evidence="8">Present with 1254 molecules/cell in log phase SD medium.</text>
</comment>
<comment type="similarity">
    <text evidence="13">Belongs to the CENP-P/CTF19 family.</text>
</comment>
<dbReference type="EMBL" id="U72265">
    <property type="protein sequence ID" value="AAB17275.1"/>
    <property type="molecule type" value="Genomic_DNA"/>
</dbReference>
<dbReference type="EMBL" id="U36624">
    <property type="protein sequence ID" value="AAB68169.1"/>
    <property type="molecule type" value="Genomic_DNA"/>
</dbReference>
<dbReference type="EMBL" id="BK006949">
    <property type="protein sequence ID" value="DAA11410.1"/>
    <property type="molecule type" value="Genomic_DNA"/>
</dbReference>
<dbReference type="PIR" id="S63464">
    <property type="entry name" value="S63464"/>
</dbReference>
<dbReference type="RefSeq" id="NP_015307.1">
    <property type="nucleotide sequence ID" value="NM_001183832.1"/>
</dbReference>
<dbReference type="PDB" id="5W94">
    <property type="method" value="X-ray"/>
    <property type="resolution" value="3.19 A"/>
    <property type="chains" value="E/H=1-6"/>
</dbReference>
<dbReference type="PDB" id="6NUW">
    <property type="method" value="EM"/>
    <property type="resolution" value="4.25 A"/>
    <property type="chains" value="D=1-369"/>
</dbReference>
<dbReference type="PDB" id="6QLD">
    <property type="method" value="EM"/>
    <property type="resolution" value="4.15 A"/>
    <property type="chains" value="P=97-366"/>
</dbReference>
<dbReference type="PDB" id="6QLE">
    <property type="method" value="EM"/>
    <property type="resolution" value="3.55 A"/>
    <property type="chains" value="P=1-369"/>
</dbReference>
<dbReference type="PDB" id="6QLF">
    <property type="method" value="EM"/>
    <property type="resolution" value="3.45 A"/>
    <property type="chains" value="P=1-369"/>
</dbReference>
<dbReference type="PDB" id="8OVW">
    <property type="method" value="EM"/>
    <property type="resolution" value="3.40 A"/>
    <property type="chains" value="P=1-369"/>
</dbReference>
<dbReference type="PDB" id="8OVX">
    <property type="method" value="EM"/>
    <property type="resolution" value="3.40 A"/>
    <property type="chains" value="P=1-369"/>
</dbReference>
<dbReference type="PDB" id="8OW0">
    <property type="method" value="EM"/>
    <property type="resolution" value="3.40 A"/>
    <property type="chains" value="P=1-369"/>
</dbReference>
<dbReference type="PDB" id="8OW1">
    <property type="method" value="EM"/>
    <property type="resolution" value="3.70 A"/>
    <property type="chains" value="P/PP=1-369"/>
</dbReference>
<dbReference type="PDBsum" id="5W94"/>
<dbReference type="PDBsum" id="6NUW"/>
<dbReference type="PDBsum" id="6QLD"/>
<dbReference type="PDBsum" id="6QLE"/>
<dbReference type="PDBsum" id="6QLF"/>
<dbReference type="PDBsum" id="8OVW"/>
<dbReference type="PDBsum" id="8OVX"/>
<dbReference type="PDBsum" id="8OW0"/>
<dbReference type="PDBsum" id="8OW1"/>
<dbReference type="EMDB" id="EMD-0523"/>
<dbReference type="EMDB" id="EMD-17224"/>
<dbReference type="EMDB" id="EMD-17225"/>
<dbReference type="EMDB" id="EMD-17226"/>
<dbReference type="EMDB" id="EMD-17227"/>
<dbReference type="EMDB" id="EMD-4579"/>
<dbReference type="EMDB" id="EMD-4580"/>
<dbReference type="EMDB" id="EMD-4581"/>
<dbReference type="SMR" id="Q02732"/>
<dbReference type="BioGRID" id="36159">
    <property type="interactions" value="323"/>
</dbReference>
<dbReference type="ComplexPortal" id="CPX-1187">
    <property type="entry name" value="COMA complex"/>
</dbReference>
<dbReference type="ComplexPortal" id="CPX-2533">
    <property type="entry name" value="Kinetochore CCAN complex"/>
</dbReference>
<dbReference type="DIP" id="DIP-3009N"/>
<dbReference type="FunCoup" id="Q02732">
    <property type="interactions" value="192"/>
</dbReference>
<dbReference type="IntAct" id="Q02732">
    <property type="interactions" value="20"/>
</dbReference>
<dbReference type="MINT" id="Q02732"/>
<dbReference type="STRING" id="4932.YPL018W"/>
<dbReference type="iPTMnet" id="Q02732"/>
<dbReference type="PaxDb" id="4932-YPL018W"/>
<dbReference type="PeptideAtlas" id="Q02732"/>
<dbReference type="EnsemblFungi" id="YPL018W_mRNA">
    <property type="protein sequence ID" value="YPL018W"/>
    <property type="gene ID" value="YPL018W"/>
</dbReference>
<dbReference type="GeneID" id="856089"/>
<dbReference type="KEGG" id="sce:YPL018W"/>
<dbReference type="AGR" id="SGD:S000005939"/>
<dbReference type="SGD" id="S000005939">
    <property type="gene designation" value="CTF19"/>
</dbReference>
<dbReference type="VEuPathDB" id="FungiDB:YPL018W"/>
<dbReference type="eggNOG" id="ENOG502S47W">
    <property type="taxonomic scope" value="Eukaryota"/>
</dbReference>
<dbReference type="HOGENOM" id="CLU_062277_0_0_1"/>
<dbReference type="InParanoid" id="Q02732"/>
<dbReference type="OMA" id="THHAGEA"/>
<dbReference type="OrthoDB" id="4036276at2759"/>
<dbReference type="BioCyc" id="YEAST:G3O-33937-MONOMER"/>
<dbReference type="BioGRID-ORCS" id="856089">
    <property type="hits" value="1 hit in 10 CRISPR screens"/>
</dbReference>
<dbReference type="PRO" id="PR:Q02732"/>
<dbReference type="Proteomes" id="UP000002311">
    <property type="component" value="Chromosome XVI"/>
</dbReference>
<dbReference type="RNAct" id="Q02732">
    <property type="molecule type" value="protein"/>
</dbReference>
<dbReference type="GO" id="GO:0000817">
    <property type="term" value="C:COMA complex"/>
    <property type="evidence" value="ECO:0000314"/>
    <property type="project" value="SGD"/>
</dbReference>
<dbReference type="GO" id="GO:0000776">
    <property type="term" value="C:kinetochore"/>
    <property type="evidence" value="ECO:0000314"/>
    <property type="project" value="SGD"/>
</dbReference>
<dbReference type="GO" id="GO:0005634">
    <property type="term" value="C:nucleus"/>
    <property type="evidence" value="ECO:0000314"/>
    <property type="project" value="SGD"/>
</dbReference>
<dbReference type="GO" id="GO:0008608">
    <property type="term" value="P:attachment of spindle microtubules to kinetochore"/>
    <property type="evidence" value="ECO:0000314"/>
    <property type="project" value="SGD"/>
</dbReference>
<dbReference type="GO" id="GO:0051301">
    <property type="term" value="P:cell division"/>
    <property type="evidence" value="ECO:0007669"/>
    <property type="project" value="UniProtKB-KW"/>
</dbReference>
<dbReference type="GO" id="GO:0007059">
    <property type="term" value="P:chromosome segregation"/>
    <property type="evidence" value="ECO:0000315"/>
    <property type="project" value="SGD"/>
</dbReference>
<dbReference type="GO" id="GO:0034087">
    <property type="term" value="P:establishment of mitotic sister chromatid cohesion"/>
    <property type="evidence" value="ECO:0000315"/>
    <property type="project" value="SGD"/>
</dbReference>
<dbReference type="GO" id="GO:0051321">
    <property type="term" value="P:meiotic cell cycle"/>
    <property type="evidence" value="ECO:0007669"/>
    <property type="project" value="UniProtKB-KW"/>
</dbReference>
<dbReference type="GO" id="GO:0007094">
    <property type="term" value="P:mitotic spindle assembly checkpoint signaling"/>
    <property type="evidence" value="ECO:0000315"/>
    <property type="project" value="SGD"/>
</dbReference>
<dbReference type="GO" id="GO:0071459">
    <property type="term" value="P:protein localization to chromosome, centromeric region"/>
    <property type="evidence" value="ECO:0000315"/>
    <property type="project" value="SGD"/>
</dbReference>
<dbReference type="CDD" id="cd23839">
    <property type="entry name" value="DRWD-C_ScCTF19"/>
    <property type="match status" value="1"/>
</dbReference>
<dbReference type="CDD" id="cd23838">
    <property type="entry name" value="DRWD-N_ScCTF19"/>
    <property type="match status" value="1"/>
</dbReference>
<feature type="chain" id="PRO_0000079492" description="Inner kinetochore subunit CTF19">
    <location>
        <begin position="1"/>
        <end position="369"/>
    </location>
</feature>
<feature type="coiled-coil region" evidence="2">
    <location>
        <begin position="51"/>
        <end position="87"/>
    </location>
</feature>
<feature type="helix" evidence="15">
    <location>
        <begin position="99"/>
        <end position="111"/>
    </location>
</feature>
<feature type="strand" evidence="15">
    <location>
        <begin position="125"/>
        <end position="128"/>
    </location>
</feature>
<feature type="helix" evidence="15">
    <location>
        <begin position="134"/>
        <end position="139"/>
    </location>
</feature>
<feature type="helix" evidence="15">
    <location>
        <begin position="150"/>
        <end position="159"/>
    </location>
</feature>
<feature type="strand" evidence="16">
    <location>
        <begin position="160"/>
        <end position="162"/>
    </location>
</feature>
<feature type="strand" evidence="15">
    <location>
        <begin position="164"/>
        <end position="171"/>
    </location>
</feature>
<feature type="turn" evidence="15">
    <location>
        <begin position="176"/>
        <end position="179"/>
    </location>
</feature>
<feature type="strand" evidence="15">
    <location>
        <begin position="180"/>
        <end position="189"/>
    </location>
</feature>
<feature type="strand" evidence="15">
    <location>
        <begin position="191"/>
        <end position="195"/>
    </location>
</feature>
<feature type="strand" evidence="15">
    <location>
        <begin position="197"/>
        <end position="204"/>
    </location>
</feature>
<feature type="strand" evidence="15">
    <location>
        <begin position="207"/>
        <end position="209"/>
    </location>
</feature>
<feature type="strand" evidence="15">
    <location>
        <begin position="214"/>
        <end position="220"/>
    </location>
</feature>
<feature type="helix" evidence="16">
    <location>
        <begin position="222"/>
        <end position="224"/>
    </location>
</feature>
<feature type="helix" evidence="15">
    <location>
        <begin position="225"/>
        <end position="231"/>
    </location>
</feature>
<feature type="helix" evidence="15">
    <location>
        <begin position="237"/>
        <end position="265"/>
    </location>
</feature>
<feature type="turn" evidence="15">
    <location>
        <begin position="266"/>
        <end position="268"/>
    </location>
</feature>
<feature type="strand" evidence="15">
    <location>
        <begin position="269"/>
        <end position="274"/>
    </location>
</feature>
<feature type="turn" evidence="15">
    <location>
        <begin position="275"/>
        <end position="278"/>
    </location>
</feature>
<feature type="strand" evidence="15">
    <location>
        <begin position="279"/>
        <end position="285"/>
    </location>
</feature>
<feature type="strand" evidence="15">
    <location>
        <begin position="287"/>
        <end position="291"/>
    </location>
</feature>
<feature type="strand" evidence="15">
    <location>
        <begin position="293"/>
        <end position="303"/>
    </location>
</feature>
<feature type="strand" evidence="15">
    <location>
        <begin position="318"/>
        <end position="327"/>
    </location>
</feature>
<feature type="strand" evidence="14">
    <location>
        <begin position="328"/>
        <end position="331"/>
    </location>
</feature>
<feature type="helix" evidence="15">
    <location>
        <begin position="334"/>
        <end position="348"/>
    </location>
</feature>
<feature type="helix" evidence="15">
    <location>
        <begin position="351"/>
        <end position="362"/>
    </location>
</feature>
<feature type="helix" evidence="15">
    <location>
        <begin position="365"/>
        <end position="367"/>
    </location>
</feature>
<reference key="1">
    <citation type="journal article" date="1999" name="J. Cell Biol.">
        <title>Ctf19p: a novel kinetochore protein in Saccharomyces cerevisiae and a potential link between the kinetochore and mitotic spindle.</title>
        <authorList>
            <person name="Hyland K.M."/>
            <person name="Kingsbury J."/>
            <person name="Koshland D."/>
            <person name="Hieter P."/>
        </authorList>
    </citation>
    <scope>NUCLEOTIDE SEQUENCE [GENOMIC DNA]</scope>
    <scope>SUBCELLULAR LOCATION</scope>
</reference>
<reference key="2">
    <citation type="journal article" date="1997" name="Nature">
        <title>The nucleotide sequence of Saccharomyces cerevisiae chromosome XVI.</title>
        <authorList>
            <person name="Bussey H."/>
            <person name="Storms R.K."/>
            <person name="Ahmed A."/>
            <person name="Albermann K."/>
            <person name="Allen E."/>
            <person name="Ansorge W."/>
            <person name="Araujo R."/>
            <person name="Aparicio A."/>
            <person name="Barrell B.G."/>
            <person name="Badcock K."/>
            <person name="Benes V."/>
            <person name="Botstein D."/>
            <person name="Bowman S."/>
            <person name="Brueckner M."/>
            <person name="Carpenter J."/>
            <person name="Cherry J.M."/>
            <person name="Chung E."/>
            <person name="Churcher C.M."/>
            <person name="Coster F."/>
            <person name="Davis K."/>
            <person name="Davis R.W."/>
            <person name="Dietrich F.S."/>
            <person name="Delius H."/>
            <person name="DiPaolo T."/>
            <person name="Dubois E."/>
            <person name="Duesterhoeft A."/>
            <person name="Duncan M."/>
            <person name="Floeth M."/>
            <person name="Fortin N."/>
            <person name="Friesen J.D."/>
            <person name="Fritz C."/>
            <person name="Goffeau A."/>
            <person name="Hall J."/>
            <person name="Hebling U."/>
            <person name="Heumann K."/>
            <person name="Hilbert H."/>
            <person name="Hillier L.W."/>
            <person name="Hunicke-Smith S."/>
            <person name="Hyman R.W."/>
            <person name="Johnston M."/>
            <person name="Kalman S."/>
            <person name="Kleine K."/>
            <person name="Komp C."/>
            <person name="Kurdi O."/>
            <person name="Lashkari D."/>
            <person name="Lew H."/>
            <person name="Lin A."/>
            <person name="Lin D."/>
            <person name="Louis E.J."/>
            <person name="Marathe R."/>
            <person name="Messenguy F."/>
            <person name="Mewes H.-W."/>
            <person name="Mirtipati S."/>
            <person name="Moestl D."/>
            <person name="Mueller-Auer S."/>
            <person name="Namath A."/>
            <person name="Nentwich U."/>
            <person name="Oefner P."/>
            <person name="Pearson D."/>
            <person name="Petel F.X."/>
            <person name="Pohl T.M."/>
            <person name="Purnelle B."/>
            <person name="Rajandream M.A."/>
            <person name="Rechmann S."/>
            <person name="Rieger M."/>
            <person name="Riles L."/>
            <person name="Roberts D."/>
            <person name="Schaefer M."/>
            <person name="Scharfe M."/>
            <person name="Scherens B."/>
            <person name="Schramm S."/>
            <person name="Schroeder M."/>
            <person name="Sdicu A.-M."/>
            <person name="Tettelin H."/>
            <person name="Urrestarazu L.A."/>
            <person name="Ushinsky S."/>
            <person name="Vierendeels F."/>
            <person name="Vissers S."/>
            <person name="Voss H."/>
            <person name="Walsh S.V."/>
            <person name="Wambutt R."/>
            <person name="Wang Y."/>
            <person name="Wedler E."/>
            <person name="Wedler H."/>
            <person name="Winnett E."/>
            <person name="Zhong W.-W."/>
            <person name="Zollner A."/>
            <person name="Vo D.H."/>
            <person name="Hani J."/>
        </authorList>
    </citation>
    <scope>NUCLEOTIDE SEQUENCE [LARGE SCALE GENOMIC DNA]</scope>
    <source>
        <strain>ATCC 204508 / S288c</strain>
    </source>
</reference>
<reference key="3">
    <citation type="journal article" date="2014" name="G3 (Bethesda)">
        <title>The reference genome sequence of Saccharomyces cerevisiae: Then and now.</title>
        <authorList>
            <person name="Engel S.R."/>
            <person name="Dietrich F.S."/>
            <person name="Fisk D.G."/>
            <person name="Binkley G."/>
            <person name="Balakrishnan R."/>
            <person name="Costanzo M.C."/>
            <person name="Dwight S.S."/>
            <person name="Hitz B.C."/>
            <person name="Karra K."/>
            <person name="Nash R.S."/>
            <person name="Weng S."/>
            <person name="Wong E.D."/>
            <person name="Lloyd P."/>
            <person name="Skrzypek M.S."/>
            <person name="Miyasato S.R."/>
            <person name="Simison M."/>
            <person name="Cherry J.M."/>
        </authorList>
    </citation>
    <scope>GENOME REANNOTATION</scope>
    <source>
        <strain>ATCC 204508 / S288c</strain>
    </source>
</reference>
<reference key="4">
    <citation type="journal article" date="1999" name="Genes Dev.">
        <title>A putative protein complex consisting of Ctf19, Mcm21, and Okp1 represents a missing link in the budding yeast kinetochore.</title>
        <authorList>
            <person name="Ortiz J."/>
            <person name="Stemmann O."/>
            <person name="Rank S."/>
            <person name="Lechner J."/>
        </authorList>
    </citation>
    <scope>INTERACTION WITH CBF2; MCM21 AND OKP1</scope>
    <scope>SUBCELLULAR LOCATION</scope>
</reference>
<reference key="5">
    <citation type="journal article" date="2000" name="Mol. Cell. Biol.">
        <title>The N-terminus of the centromere H3-like protein Cse4p performs an essential function distinct from that of the histone fold domain.</title>
        <authorList>
            <person name="Chen Y."/>
            <person name="Baker R.E."/>
            <person name="Keith K.C."/>
            <person name="Harris K."/>
            <person name="Stoler S."/>
            <person name="Fitzgerald-Hayes M."/>
        </authorList>
    </citation>
    <scope>INTERACTION WITH CSE4</scope>
    <scope>SUBCELLULAR LOCATION</scope>
</reference>
<reference key="6">
    <citation type="journal article" date="2002" name="Cell">
        <title>Phospho-regulation of kinetochore-microtubule attachments by the Aurora kinase Ipl1p.</title>
        <authorList>
            <person name="Cheeseman I.M."/>
            <person name="Anderson S."/>
            <person name="Jwa M."/>
            <person name="Green E.M."/>
            <person name="Kang J.-S."/>
            <person name="Yates J.R. III"/>
            <person name="Chan C.S.M."/>
            <person name="Drubin D.G."/>
            <person name="Barnes G."/>
        </authorList>
    </citation>
    <scope>IDENTIFICATION BY MASS SPECTROMETRY</scope>
    <scope>COMPONENT OF CTF19 COMPLEX</scope>
</reference>
<reference key="7">
    <citation type="journal article" date="2002" name="Genes Dev.">
        <title>Ctf3p, the Mis6 budding yeast homolog, interacts with Mcm22p and Mcm16p at the yeast outer kinetochore.</title>
        <authorList>
            <person name="Measday V."/>
            <person name="Hailey D.W."/>
            <person name="Pot I."/>
            <person name="Givan S.A."/>
            <person name="Hyland K.M."/>
            <person name="Cagney G."/>
            <person name="Fields S."/>
            <person name="Davis T.N."/>
            <person name="Hieter P."/>
        </authorList>
    </citation>
    <scope>INTERACTION WITH CTF3; MCM16 AND MCM22</scope>
    <scope>SUBCELLULAR LOCATION</scope>
</reference>
<reference key="8">
    <citation type="journal article" date="2003" name="Genes Dev.">
        <title>Hierarchical assembly of the budding yeast kinetochore from multiple subcomplexes.</title>
        <authorList>
            <person name="De Wulf P."/>
            <person name="McAinsh A.D."/>
            <person name="Sorger P.K."/>
        </authorList>
    </citation>
    <scope>IDENTIFICATION BY MASS SPECTROMETRY</scope>
    <scope>COMPONENT OF COMA COMPLEX</scope>
</reference>
<reference key="9">
    <citation type="journal article" date="2003" name="Mol. Biol. Cell">
        <title>Chl4p and Iml3p are two new members of the budding yeast outer kinetochore.</title>
        <authorList>
            <person name="Pot I."/>
            <person name="Measday V."/>
            <person name="Snydsman B."/>
            <person name="Cagney G."/>
            <person name="Fields S."/>
            <person name="Davis T.N."/>
            <person name="Muller E.G.D."/>
            <person name="Hieter P."/>
        </authorList>
    </citation>
    <scope>INTERACTION WITH CHL4; CTF3 AND IML3</scope>
    <scope>SUBCELLULAR LOCATION</scope>
</reference>
<reference key="10">
    <citation type="journal article" date="2003" name="Mol. Cell">
        <title>Assigning function to yeast proteins by integration of technologies.</title>
        <authorList>
            <person name="Hazbun T.R."/>
            <person name="Malmstroem L."/>
            <person name="Anderson S."/>
            <person name="Graczyk B.J."/>
            <person name="Fox B."/>
            <person name="Riffle M."/>
            <person name="Sundin B.A."/>
            <person name="Aranda J.D."/>
            <person name="McDonald W.H."/>
            <person name="Chiu C.-H."/>
            <person name="Snydsman B.E."/>
            <person name="Bradley P."/>
            <person name="Muller E.G.D."/>
            <person name="Fields S."/>
            <person name="Baker D."/>
            <person name="Yates J.R. III"/>
            <person name="Davis T.N."/>
        </authorList>
    </citation>
    <scope>IDENTIFICATION BY MASS SPECTROMETRY</scope>
</reference>
<reference key="11">
    <citation type="journal article" date="2003" name="Nature">
        <title>Global analysis of protein expression in yeast.</title>
        <authorList>
            <person name="Ghaemmaghami S."/>
            <person name="Huh W.-K."/>
            <person name="Bower K."/>
            <person name="Howson R.W."/>
            <person name="Belle A."/>
            <person name="Dephoure N."/>
            <person name="O'Shea E.K."/>
            <person name="Weissman J.S."/>
        </authorList>
    </citation>
    <scope>LEVEL OF PROTEIN EXPRESSION [LARGE SCALE ANALYSIS]</scope>
</reference>
<reference key="12">
    <citation type="journal article" date="2012" name="Nat. Cell Biol.">
        <title>CENP-T proteins are conserved centromere receptors of the Ndc80 complex.</title>
        <authorList>
            <person name="Schleiffer A."/>
            <person name="Maier M."/>
            <person name="Litos G."/>
            <person name="Lampert F."/>
            <person name="Hornung P."/>
            <person name="Mechtler K."/>
            <person name="Westermann S."/>
        </authorList>
    </citation>
    <scope>IDENTIFICATION IN CCAN</scope>
    <scope>SUBUNIT</scope>
</reference>
<reference key="13">
    <citation type="journal article" date="2017" name="EMBO J.">
        <title>Molecular basis for inner kinetochore configuration through RWD domain-peptide interactions.</title>
        <authorList>
            <person name="Schmitzberger F."/>
            <person name="Richter M.M."/>
            <person name="Gordiyenko Y."/>
            <person name="Robinson C.V."/>
            <person name="Dadlez M."/>
            <person name="Westermann S."/>
        </authorList>
    </citation>
    <scope>SUBCELLULAR LOCATION</scope>
</reference>
<organism>
    <name type="scientific">Saccharomyces cerevisiae (strain ATCC 204508 / S288c)</name>
    <name type="common">Baker's yeast</name>
    <dbReference type="NCBI Taxonomy" id="559292"/>
    <lineage>
        <taxon>Eukaryota</taxon>
        <taxon>Fungi</taxon>
        <taxon>Dikarya</taxon>
        <taxon>Ascomycota</taxon>
        <taxon>Saccharomycotina</taxon>
        <taxon>Saccharomycetes</taxon>
        <taxon>Saccharomycetales</taxon>
        <taxon>Saccharomycetaceae</taxon>
        <taxon>Saccharomyces</taxon>
    </lineage>
</organism>
<name>CENPP_YEAST</name>